<comment type="function">
    <text evidence="4 5 6">May control regulatory pathways relevant to schizophrenia and to psychotic illness. May play a role in late central nervous system development by modulating EPO expression in response to cellular oxygen level. Forms a heterodimer that binds core DNA sequence 5'-TACGTG-3' within the hypoxia response element (HRE) leading to transcriptional repression on its target gene TH (PubMed:27782878).</text>
</comment>
<comment type="subunit">
    <text evidence="5 6">Efficient DNA binding requires dimerization with another bHLH protein. Interacts with ARNT; forms a heterodimer that binds core DNA sequence 5'-[AG]CGTG-3' within the hypoxia response element (HRE) leading to a transcriptional repressor on its target gene TH.</text>
</comment>
<comment type="subcellular location">
    <subcellularLocation>
        <location>Nucleus</location>
    </subcellularLocation>
</comment>
<comment type="tissue specificity">
    <text evidence="4">Expressed in brain in inhibitory interneurons. Also found in spinal cord.</text>
</comment>
<comment type="developmental stage">
    <text>First detected between embryonic day 15 and day 16.</text>
</comment>
<organism>
    <name type="scientific">Mus musculus</name>
    <name type="common">Mouse</name>
    <dbReference type="NCBI Taxonomy" id="10090"/>
    <lineage>
        <taxon>Eukaryota</taxon>
        <taxon>Metazoa</taxon>
        <taxon>Chordata</taxon>
        <taxon>Craniata</taxon>
        <taxon>Vertebrata</taxon>
        <taxon>Euteleostomi</taxon>
        <taxon>Mammalia</taxon>
        <taxon>Eutheria</taxon>
        <taxon>Euarchontoglires</taxon>
        <taxon>Glires</taxon>
        <taxon>Rodentia</taxon>
        <taxon>Myomorpha</taxon>
        <taxon>Muroidea</taxon>
        <taxon>Muridae</taxon>
        <taxon>Murinae</taxon>
        <taxon>Mus</taxon>
        <taxon>Mus</taxon>
    </lineage>
</organism>
<reference key="1">
    <citation type="journal article" date="1997" name="Proc. Natl. Acad. Sci. U.S.A.">
        <title>Molecular characterization of two mammalian bHLH-PAS domain proteins selectively expressed in the central nervous system.</title>
        <authorList>
            <person name="Zhou Y.-D."/>
            <person name="Barnard M."/>
            <person name="Tian H."/>
            <person name="Li X."/>
            <person name="Ring H.Z."/>
            <person name="Francke U."/>
            <person name="Shelton J."/>
            <person name="Richardson J."/>
            <person name="Russell D.W."/>
            <person name="McKnight S.L."/>
        </authorList>
    </citation>
    <scope>NUCLEOTIDE SEQUENCE [MRNA]</scope>
    <source>
        <tissue>Brain</tissue>
    </source>
</reference>
<reference key="2">
    <citation type="journal article" date="2004" name="Proc. Natl. Acad. Sci. U.S.A.">
        <title>Behavioral and regulatory abnormalities in mice deficient in the NPAS1 and NPAS3 transcription factors.</title>
        <authorList>
            <person name="Erbel-Sieler C."/>
            <person name="Dudley C."/>
            <person name="Zhou Y."/>
            <person name="Wu X."/>
            <person name="Estill S.J."/>
            <person name="Han T."/>
            <person name="Diaz-Arrastia R."/>
            <person name="Brunskill E.W."/>
            <person name="Potter S.S."/>
            <person name="McKnight S.L."/>
        </authorList>
    </citation>
    <scope>FUNCTION</scope>
    <scope>TISSUE SPECIFICITY</scope>
</reference>
<reference key="3">
    <citation type="journal article" date="2005" name="J. Neurosci. Res.">
        <title>Novel function of neuronal PAS domain protein 1 in erythropoietin expression in neuronal cells.</title>
        <authorList>
            <person name="Ohsawa S."/>
            <person name="Hamada S."/>
            <person name="Kakinuma Y."/>
            <person name="Yagi T."/>
            <person name="Miura M."/>
        </authorList>
    </citation>
    <scope>FUNCTION</scope>
    <scope>INTERACTION WITH ARNT</scope>
</reference>
<reference evidence="7" key="4">
    <citation type="journal article" date="2016" name="Elife">
        <title>NPAS1-ARNT and NPAS3-ARNT crystal structures implicate the bHLH-PAS family as multi-ligand binding transcription factors.</title>
        <authorList>
            <person name="Wu D."/>
            <person name="Su X."/>
            <person name="Potluri N."/>
            <person name="Kim Y."/>
            <person name="Rastinejad F."/>
        </authorList>
    </citation>
    <scope>X-RAY CRYSTALLOGRAPHY (3.20 ANGSTROMS) OF 43-423 IN COMPLEX WITH ARNT</scope>
    <scope>MUTAGENESIS OF PHE-249; ARG-251; VAL-270 AND HIS-272</scope>
    <scope>INTERACTION WITH ARNT</scope>
    <scope>FUNCTION</scope>
</reference>
<evidence type="ECO:0000255" key="1">
    <source>
        <dbReference type="PROSITE-ProRule" id="PRU00140"/>
    </source>
</evidence>
<evidence type="ECO:0000255" key="2">
    <source>
        <dbReference type="PROSITE-ProRule" id="PRU00981"/>
    </source>
</evidence>
<evidence type="ECO:0000256" key="3">
    <source>
        <dbReference type="SAM" id="MobiDB-lite"/>
    </source>
</evidence>
<evidence type="ECO:0000269" key="4">
    <source>
    </source>
</evidence>
<evidence type="ECO:0000269" key="5">
    <source>
    </source>
</evidence>
<evidence type="ECO:0000269" key="6">
    <source>
    </source>
</evidence>
<evidence type="ECO:0007744" key="7">
    <source>
        <dbReference type="PDB" id="5SY5"/>
    </source>
</evidence>
<evidence type="ECO:0007829" key="8">
    <source>
        <dbReference type="PDB" id="5SY5"/>
    </source>
</evidence>
<gene>
    <name type="primary">Npas1</name>
</gene>
<name>NPAS1_MOUSE</name>
<dbReference type="EMBL" id="U77967">
    <property type="protein sequence ID" value="AAB47247.1"/>
    <property type="molecule type" value="mRNA"/>
</dbReference>
<dbReference type="CCDS" id="CCDS20850.1"/>
<dbReference type="RefSeq" id="NP_032744.1">
    <property type="nucleotide sequence ID" value="NM_008718.2"/>
</dbReference>
<dbReference type="RefSeq" id="XP_017177510.1">
    <property type="nucleotide sequence ID" value="XM_017322021.3"/>
</dbReference>
<dbReference type="PDB" id="5SY5">
    <property type="method" value="X-ray"/>
    <property type="resolution" value="3.20 A"/>
    <property type="chains" value="B/D/F=43-423"/>
</dbReference>
<dbReference type="PDBsum" id="5SY5"/>
<dbReference type="SMR" id="P97459"/>
<dbReference type="BioGRID" id="201818">
    <property type="interactions" value="1"/>
</dbReference>
<dbReference type="FunCoup" id="P97459">
    <property type="interactions" value="765"/>
</dbReference>
<dbReference type="STRING" id="10090.ENSMUSP00000002053"/>
<dbReference type="GlyGen" id="P97459">
    <property type="glycosylation" value="1 site"/>
</dbReference>
<dbReference type="PhosphoSitePlus" id="P97459"/>
<dbReference type="PaxDb" id="10090-ENSMUSP00000002053"/>
<dbReference type="ProteomicsDB" id="253003"/>
<dbReference type="Antibodypedia" id="18161">
    <property type="antibodies" value="227 antibodies from 31 providers"/>
</dbReference>
<dbReference type="DNASU" id="18142"/>
<dbReference type="Ensembl" id="ENSMUST00000002053.9">
    <property type="protein sequence ID" value="ENSMUSP00000002053.9"/>
    <property type="gene ID" value="ENSMUSG00000001988.10"/>
</dbReference>
<dbReference type="Ensembl" id="ENSMUST00000210748.2">
    <property type="protein sequence ID" value="ENSMUSP00000147412.2"/>
    <property type="gene ID" value="ENSMUSG00000001988.10"/>
</dbReference>
<dbReference type="GeneID" id="18142"/>
<dbReference type="KEGG" id="mmu:18142"/>
<dbReference type="UCSC" id="uc009fhv.2">
    <property type="organism name" value="mouse"/>
</dbReference>
<dbReference type="AGR" id="MGI:109205"/>
<dbReference type="CTD" id="4861"/>
<dbReference type="MGI" id="MGI:109205">
    <property type="gene designation" value="Npas1"/>
</dbReference>
<dbReference type="VEuPathDB" id="HostDB:ENSMUSG00000001988"/>
<dbReference type="eggNOG" id="KOG3558">
    <property type="taxonomic scope" value="Eukaryota"/>
</dbReference>
<dbReference type="GeneTree" id="ENSGT00940000161295"/>
<dbReference type="HOGENOM" id="CLU_010044_6_3_1"/>
<dbReference type="InParanoid" id="P97459"/>
<dbReference type="OMA" id="MTCEDAS"/>
<dbReference type="OrthoDB" id="6021714at2759"/>
<dbReference type="PhylomeDB" id="P97459"/>
<dbReference type="TreeFam" id="TF317772"/>
<dbReference type="BioGRID-ORCS" id="18142">
    <property type="hits" value="3 hits in 80 CRISPR screens"/>
</dbReference>
<dbReference type="PRO" id="PR:P97459"/>
<dbReference type="Proteomes" id="UP000000589">
    <property type="component" value="Chromosome 7"/>
</dbReference>
<dbReference type="RNAct" id="P97459">
    <property type="molecule type" value="protein"/>
</dbReference>
<dbReference type="Bgee" id="ENSMUSG00000001988">
    <property type="expression patterns" value="Expressed in urethra and 60 other cell types or tissues"/>
</dbReference>
<dbReference type="ExpressionAtlas" id="P97459">
    <property type="expression patterns" value="baseline and differential"/>
</dbReference>
<dbReference type="GO" id="GO:0005634">
    <property type="term" value="C:nucleus"/>
    <property type="evidence" value="ECO:0000314"/>
    <property type="project" value="MGI"/>
</dbReference>
<dbReference type="GO" id="GO:0003677">
    <property type="term" value="F:DNA binding"/>
    <property type="evidence" value="ECO:0007669"/>
    <property type="project" value="UniProtKB-KW"/>
</dbReference>
<dbReference type="GO" id="GO:0046982">
    <property type="term" value="F:protein heterodimerization activity"/>
    <property type="evidence" value="ECO:0000314"/>
    <property type="project" value="UniProtKB"/>
</dbReference>
<dbReference type="GO" id="GO:0042711">
    <property type="term" value="P:maternal behavior"/>
    <property type="evidence" value="ECO:0000316"/>
    <property type="project" value="MGI"/>
</dbReference>
<dbReference type="GO" id="GO:0045892">
    <property type="term" value="P:negative regulation of DNA-templated transcription"/>
    <property type="evidence" value="ECO:0000314"/>
    <property type="project" value="UniProtKB"/>
</dbReference>
<dbReference type="GO" id="GO:0000122">
    <property type="term" value="P:negative regulation of transcription by RNA polymerase II"/>
    <property type="evidence" value="ECO:0000314"/>
    <property type="project" value="MGI"/>
</dbReference>
<dbReference type="GO" id="GO:0001964">
    <property type="term" value="P:startle response"/>
    <property type="evidence" value="ECO:0000316"/>
    <property type="project" value="MGI"/>
</dbReference>
<dbReference type="CDD" id="cd19731">
    <property type="entry name" value="bHLH-PAS_NPAS1_PASD5"/>
    <property type="match status" value="1"/>
</dbReference>
<dbReference type="CDD" id="cd00130">
    <property type="entry name" value="PAS"/>
    <property type="match status" value="2"/>
</dbReference>
<dbReference type="FunFam" id="4.10.280.10:FF:000083">
    <property type="entry name" value="Neuronal PAS domain protein 1"/>
    <property type="match status" value="1"/>
</dbReference>
<dbReference type="FunFam" id="3.30.450.20:FF:000025">
    <property type="entry name" value="Neuronal PAS domain protein 3 isoform 1"/>
    <property type="match status" value="1"/>
</dbReference>
<dbReference type="FunFam" id="3.30.450.20:FF:000021">
    <property type="entry name" value="Neuronal PAS domain-containing protein 3"/>
    <property type="match status" value="1"/>
</dbReference>
<dbReference type="Gene3D" id="4.10.280.10">
    <property type="entry name" value="Helix-loop-helix DNA-binding domain"/>
    <property type="match status" value="1"/>
</dbReference>
<dbReference type="Gene3D" id="3.30.450.20">
    <property type="entry name" value="PAS domain"/>
    <property type="match status" value="2"/>
</dbReference>
<dbReference type="InterPro" id="IPR011598">
    <property type="entry name" value="bHLH_dom"/>
</dbReference>
<dbReference type="InterPro" id="IPR036638">
    <property type="entry name" value="HLH_DNA-bd_sf"/>
</dbReference>
<dbReference type="InterPro" id="IPR000014">
    <property type="entry name" value="PAS"/>
</dbReference>
<dbReference type="InterPro" id="IPR035965">
    <property type="entry name" value="PAS-like_dom_sf"/>
</dbReference>
<dbReference type="InterPro" id="IPR013767">
    <property type="entry name" value="PAS_fold"/>
</dbReference>
<dbReference type="InterPro" id="IPR013655">
    <property type="entry name" value="PAS_fold_3"/>
</dbReference>
<dbReference type="NCBIfam" id="TIGR00229">
    <property type="entry name" value="sensory_box"/>
    <property type="match status" value="1"/>
</dbReference>
<dbReference type="PANTHER" id="PTHR23043">
    <property type="entry name" value="HYPOXIA-INDUCIBLE FACTOR 1 ALPHA"/>
    <property type="match status" value="1"/>
</dbReference>
<dbReference type="PANTHER" id="PTHR23043:SF25">
    <property type="entry name" value="NEURONAL PAS DOMAIN-CONTAINING PROTEIN 1"/>
    <property type="match status" value="1"/>
</dbReference>
<dbReference type="Pfam" id="PF23171">
    <property type="entry name" value="bHLH_HIF1A"/>
    <property type="match status" value="1"/>
</dbReference>
<dbReference type="Pfam" id="PF00989">
    <property type="entry name" value="PAS"/>
    <property type="match status" value="1"/>
</dbReference>
<dbReference type="Pfam" id="PF08447">
    <property type="entry name" value="PAS_3"/>
    <property type="match status" value="1"/>
</dbReference>
<dbReference type="SMART" id="SM00353">
    <property type="entry name" value="HLH"/>
    <property type="match status" value="1"/>
</dbReference>
<dbReference type="SMART" id="SM00091">
    <property type="entry name" value="PAS"/>
    <property type="match status" value="2"/>
</dbReference>
<dbReference type="SUPFAM" id="SSF47459">
    <property type="entry name" value="HLH, helix-loop-helix DNA-binding domain"/>
    <property type="match status" value="1"/>
</dbReference>
<dbReference type="SUPFAM" id="SSF55785">
    <property type="entry name" value="PYP-like sensor domain (PAS domain)"/>
    <property type="match status" value="2"/>
</dbReference>
<dbReference type="PROSITE" id="PS50888">
    <property type="entry name" value="BHLH"/>
    <property type="match status" value="1"/>
</dbReference>
<dbReference type="PROSITE" id="PS50112">
    <property type="entry name" value="PAS"/>
    <property type="match status" value="1"/>
</dbReference>
<keyword id="KW-0002">3D-structure</keyword>
<keyword id="KW-0238">DNA-binding</keyword>
<keyword id="KW-0539">Nucleus</keyword>
<keyword id="KW-1185">Reference proteome</keyword>
<keyword id="KW-0677">Repeat</keyword>
<keyword id="KW-0804">Transcription</keyword>
<keyword id="KW-0805">Transcription regulation</keyword>
<sequence length="594" mass="63737">MATPYPRSGGRGEVKCGGGRGAGVPWDFLPGLMVKAPPGPCLQAQRKEKSRNAARWRRGKENLEFFELAKLLPLPGAISSQLDKASIVRLSVTYLRLRRFAALGAPPWGLRAVGPPAGLAPGRRGPVALVSEVFEQHLGGHILQSLDGFVFALNQEGKFLYISETVSIYLGLSQVELTGSSVFDYIHPGDHSEVLEQLGLRAASIGPPTPPSVSSSSSSSSSSLVDTPEIEASPTEASPAFRAQERSFFVRMKSTLTKRGLNVKASGYKVIHVTGRLRARALGLVALGHTLPPAPLAELPLHGHMIVFRLSLGLTILACESRVSDHMDMGPSELVGRSCYQFVHGQDATRIRQSHLDLLDKGQVVTGYYRWLQRAGGFVWLQSVATVAGNGKSTGEHHVLWVSHVLSNAEGSQTPLDAFQLPAIVSQEEPSRPGPEPTEEEPPVDGKQAVPADQDKDKDPQARGKRIKVEASPKEARGSEDSGEEELSDPPAPPRPEFTSVIRAGALKHDPVLPWGLTTPGDPSPALLHAGFLPPVVRGLCTPGTIRYGPAELSLMYPHLHRLGAGPSLPEAFYPTLGLPYPGPTGTRVQRKGD</sequence>
<protein>
    <recommendedName>
        <fullName>Neuronal PAS domain-containing protein 1</fullName>
        <shortName>Neuronal PAS1</shortName>
    </recommendedName>
</protein>
<feature type="chain" id="PRO_0000127405" description="Neuronal PAS domain-containing protein 1">
    <location>
        <begin position="1"/>
        <end position="594"/>
    </location>
</feature>
<feature type="domain" description="bHLH" evidence="2">
    <location>
        <begin position="45"/>
        <end position="98"/>
    </location>
</feature>
<feature type="domain" description="PAS 1" evidence="1">
    <location>
        <begin position="135"/>
        <end position="205"/>
    </location>
</feature>
<feature type="domain" description="PAS 2" evidence="1">
    <location>
        <begin position="294"/>
        <end position="360"/>
    </location>
</feature>
<feature type="domain" description="PAC">
    <location>
        <begin position="366"/>
        <end position="409"/>
    </location>
</feature>
<feature type="region of interest" description="Disordered" evidence="3">
    <location>
        <begin position="206"/>
        <end position="237"/>
    </location>
</feature>
<feature type="region of interest" description="Disordered" evidence="3">
    <location>
        <begin position="427"/>
        <end position="498"/>
    </location>
</feature>
<feature type="compositionally biased region" description="Low complexity" evidence="3">
    <location>
        <begin position="212"/>
        <end position="223"/>
    </location>
</feature>
<feature type="compositionally biased region" description="Basic and acidic residues" evidence="3">
    <location>
        <begin position="453"/>
        <end position="480"/>
    </location>
</feature>
<feature type="mutagenesis site" description="Destabilizes heterodimerization with ARNT. Compromises the transcriptional repression activity of heterodimer ARNT:NPAS1." evidence="6">
    <original>F</original>
    <variation>D</variation>
    <location>
        <position position="249"/>
    </location>
</feature>
<feature type="mutagenesis site" description="Destabilizes heterodimerization with ARNT. Compromises the transcriptional repression activity of heterodimer ARNT:NPAS1." evidence="6">
    <original>R</original>
    <variation>A</variation>
    <location>
        <position position="251"/>
    </location>
</feature>
<feature type="mutagenesis site" description="Destabilizes heterodimerization with ARNT. Compromises the transcriptional repression activity of heterodimer ARNT:NPAS1." evidence="6">
    <original>V</original>
    <variation>D</variation>
    <location>
        <position position="270"/>
    </location>
</feature>
<feature type="mutagenesis site" description="Destabilizes heterodimerization with ARNT. Compromises the transcriptional repression activity of heterodimer ARNT:NPAS1." evidence="6">
    <original>H</original>
    <variation>A</variation>
    <location>
        <position position="272"/>
    </location>
</feature>
<feature type="helix" evidence="8">
    <location>
        <begin position="53"/>
        <end position="71"/>
    </location>
</feature>
<feature type="strand" evidence="8">
    <location>
        <begin position="72"/>
        <end position="74"/>
    </location>
</feature>
<feature type="helix" evidence="8">
    <location>
        <begin position="76"/>
        <end position="79"/>
    </location>
</feature>
<feature type="helix" evidence="8">
    <location>
        <begin position="84"/>
        <end position="102"/>
    </location>
</feature>
<feature type="strand" evidence="8">
    <location>
        <begin position="103"/>
        <end position="106"/>
    </location>
</feature>
<feature type="turn" evidence="8">
    <location>
        <begin position="130"/>
        <end position="134"/>
    </location>
</feature>
<feature type="helix" evidence="8">
    <location>
        <begin position="138"/>
        <end position="145"/>
    </location>
</feature>
<feature type="strand" evidence="8">
    <location>
        <begin position="146"/>
        <end position="153"/>
    </location>
</feature>
<feature type="strand" evidence="8">
    <location>
        <begin position="158"/>
        <end position="162"/>
    </location>
</feature>
<feature type="helix" evidence="8">
    <location>
        <begin position="166"/>
        <end position="169"/>
    </location>
</feature>
<feature type="helix" evidence="8">
    <location>
        <begin position="174"/>
        <end position="177"/>
    </location>
</feature>
<feature type="helix" evidence="8">
    <location>
        <begin position="182"/>
        <end position="184"/>
    </location>
</feature>
<feature type="helix" evidence="8">
    <location>
        <begin position="191"/>
        <end position="198"/>
    </location>
</feature>
<feature type="strand" evidence="8">
    <location>
        <begin position="245"/>
        <end position="253"/>
    </location>
</feature>
<feature type="strand" evidence="8">
    <location>
        <begin position="268"/>
        <end position="276"/>
    </location>
</feature>
<feature type="strand" evidence="8">
    <location>
        <begin position="285"/>
        <end position="290"/>
    </location>
</feature>
<feature type="strand" evidence="8">
    <location>
        <begin position="305"/>
        <end position="310"/>
    </location>
</feature>
<feature type="strand" evidence="8">
    <location>
        <begin position="315"/>
        <end position="319"/>
    </location>
</feature>
<feature type="helix" evidence="8">
    <location>
        <begin position="321"/>
        <end position="325"/>
    </location>
</feature>
<feature type="helix" evidence="8">
    <location>
        <begin position="331"/>
        <end position="334"/>
    </location>
</feature>
<feature type="helix" evidence="8">
    <location>
        <begin position="339"/>
        <end position="342"/>
    </location>
</feature>
<feature type="turn" evidence="8">
    <location>
        <begin position="345"/>
        <end position="347"/>
    </location>
</feature>
<feature type="helix" evidence="8">
    <location>
        <begin position="348"/>
        <end position="361"/>
    </location>
</feature>
<feature type="strand" evidence="8">
    <location>
        <begin position="362"/>
        <end position="365"/>
    </location>
</feature>
<feature type="strand" evidence="8">
    <location>
        <begin position="368"/>
        <end position="372"/>
    </location>
</feature>
<feature type="strand" evidence="8">
    <location>
        <begin position="374"/>
        <end position="376"/>
    </location>
</feature>
<feature type="strand" evidence="8">
    <location>
        <begin position="378"/>
        <end position="387"/>
    </location>
</feature>
<feature type="strand" evidence="8">
    <location>
        <begin position="399"/>
        <end position="405"/>
    </location>
</feature>
<accession>P97459</accession>
<proteinExistence type="evidence at protein level"/>